<evidence type="ECO:0000255" key="1">
    <source>
        <dbReference type="HAMAP-Rule" id="MF_01050"/>
    </source>
</evidence>
<keyword id="KW-0963">Cytoplasm</keyword>
<keyword id="KW-0808">Transferase</keyword>
<gene>
    <name evidence="1" type="primary">caiB</name>
    <name type="ordered locus">UTI89_C0044</name>
</gene>
<comment type="function">
    <text evidence="1">Catalyzes the reversible transfer of the CoA moiety from gamma-butyrobetainyl-CoA to L-carnitine to generate L-carnitinyl-CoA and gamma-butyrobetaine. Is also able to catalyze the reversible transfer of the CoA moiety from gamma-butyrobetainyl-CoA or L-carnitinyl-CoA to crotonobetaine to generate crotonobetainyl-CoA.</text>
</comment>
<comment type="catalytic activity">
    <reaction evidence="1">
        <text>crotonobetainyl-CoA + (R)-carnitine = crotonobetaine + (R)-carnitinyl-CoA</text>
        <dbReference type="Rhea" id="RHEA:28526"/>
        <dbReference type="ChEBI" id="CHEBI:16347"/>
        <dbReference type="ChEBI" id="CHEBI:17237"/>
        <dbReference type="ChEBI" id="CHEBI:60932"/>
        <dbReference type="ChEBI" id="CHEBI:60933"/>
        <dbReference type="EC" id="2.8.3.21"/>
    </reaction>
</comment>
<comment type="catalytic activity">
    <reaction evidence="1">
        <text>4-(trimethylamino)butanoyl-CoA + (R)-carnitine = (R)-carnitinyl-CoA + 4-(trimethylamino)butanoate</text>
        <dbReference type="Rhea" id="RHEA:28418"/>
        <dbReference type="ChEBI" id="CHEBI:16244"/>
        <dbReference type="ChEBI" id="CHEBI:16347"/>
        <dbReference type="ChEBI" id="CHEBI:60932"/>
        <dbReference type="ChEBI" id="CHEBI:61513"/>
        <dbReference type="EC" id="2.8.3.21"/>
    </reaction>
</comment>
<comment type="pathway">
    <text evidence="1">Amine and polyamine metabolism; carnitine metabolism.</text>
</comment>
<comment type="subunit">
    <text evidence="1">Homodimer.</text>
</comment>
<comment type="subcellular location">
    <subcellularLocation>
        <location evidence="1">Cytoplasm</location>
    </subcellularLocation>
</comment>
<comment type="similarity">
    <text evidence="1">Belongs to the CoA-transferase III family. CaiB subfamily.</text>
</comment>
<feature type="chain" id="PRO_0000300978" description="L-carnitine CoA-transferase">
    <location>
        <begin position="1"/>
        <end position="405"/>
    </location>
</feature>
<feature type="active site" description="Nucleophile" evidence="1">
    <location>
        <position position="169"/>
    </location>
</feature>
<feature type="binding site" evidence="1">
    <location>
        <position position="97"/>
    </location>
    <ligand>
        <name>CoA</name>
        <dbReference type="ChEBI" id="CHEBI:57287"/>
    </ligand>
</feature>
<feature type="binding site" evidence="1">
    <location>
        <position position="104"/>
    </location>
    <ligand>
        <name>CoA</name>
        <dbReference type="ChEBI" id="CHEBI:57287"/>
    </ligand>
</feature>
<sequence>MDHLPMPKFGPLAGLRVVFSGIEIAGPFAGQMFAEWGAEVIWIENVAWADTIRVQPNYPQLSRRNLHALSLNIFKDEGREAFLKLMETTDIFIEASKGPAFARRGITDEVLWQHNPKLVIAHLSGFGQYGTEEYTNLPAYNTIAQAFSGYLIQNGDVDQPMPAFPYTADYFSGLTATTAALAALHKVRETGKGESIDIAMYEVMLRMGQYFMMDYFNGGEMCPRMTKGKDPYYAGCGLYKCADGYIVMELVGITQIAECFKDIGLAHLLGTPEIPEGTQLIHRIECPYGPLVEEKLDAWLAAHTIAEVKERFAELNIACAKVLTVPELESNPQYVARESITQWQTMDGRTCKGPNIMPKFKNNPGQIWRGMPSHGMDTAAILKNIGYSENDIQELVSKGLAKVED</sequence>
<proteinExistence type="inferred from homology"/>
<name>CAIB_ECOUT</name>
<reference key="1">
    <citation type="journal article" date="2006" name="Proc. Natl. Acad. Sci. U.S.A.">
        <title>Identification of genes subject to positive selection in uropathogenic strains of Escherichia coli: a comparative genomics approach.</title>
        <authorList>
            <person name="Chen S.L."/>
            <person name="Hung C.-S."/>
            <person name="Xu J."/>
            <person name="Reigstad C.S."/>
            <person name="Magrini V."/>
            <person name="Sabo A."/>
            <person name="Blasiar D."/>
            <person name="Bieri T."/>
            <person name="Meyer R.R."/>
            <person name="Ozersky P."/>
            <person name="Armstrong J.R."/>
            <person name="Fulton R.S."/>
            <person name="Latreille J.P."/>
            <person name="Spieth J."/>
            <person name="Hooton T.M."/>
            <person name="Mardis E.R."/>
            <person name="Hultgren S.J."/>
            <person name="Gordon J.I."/>
        </authorList>
    </citation>
    <scope>NUCLEOTIDE SEQUENCE [LARGE SCALE GENOMIC DNA]</scope>
    <source>
        <strain>UTI89 / UPEC</strain>
    </source>
</reference>
<organism>
    <name type="scientific">Escherichia coli (strain UTI89 / UPEC)</name>
    <dbReference type="NCBI Taxonomy" id="364106"/>
    <lineage>
        <taxon>Bacteria</taxon>
        <taxon>Pseudomonadati</taxon>
        <taxon>Pseudomonadota</taxon>
        <taxon>Gammaproteobacteria</taxon>
        <taxon>Enterobacterales</taxon>
        <taxon>Enterobacteriaceae</taxon>
        <taxon>Escherichia</taxon>
    </lineage>
</organism>
<dbReference type="EC" id="2.8.3.21" evidence="1"/>
<dbReference type="EMBL" id="CP000243">
    <property type="protein sequence ID" value="ABE05554.1"/>
    <property type="molecule type" value="Genomic_DNA"/>
</dbReference>
<dbReference type="RefSeq" id="WP_000349942.1">
    <property type="nucleotide sequence ID" value="NZ_CP064825.1"/>
</dbReference>
<dbReference type="SMR" id="Q1RGG0"/>
<dbReference type="KEGG" id="eci:UTI89_C0044"/>
<dbReference type="HOGENOM" id="CLU_033975_2_0_6"/>
<dbReference type="UniPathway" id="UPA00117"/>
<dbReference type="Proteomes" id="UP000001952">
    <property type="component" value="Chromosome"/>
</dbReference>
<dbReference type="GO" id="GO:0005737">
    <property type="term" value="C:cytoplasm"/>
    <property type="evidence" value="ECO:0007669"/>
    <property type="project" value="UniProtKB-SubCell"/>
</dbReference>
<dbReference type="GO" id="GO:0008735">
    <property type="term" value="F:L-carnitine CoA-transferase activity"/>
    <property type="evidence" value="ECO:0007669"/>
    <property type="project" value="RHEA"/>
</dbReference>
<dbReference type="GO" id="GO:0009437">
    <property type="term" value="P:carnitine metabolic process"/>
    <property type="evidence" value="ECO:0007669"/>
    <property type="project" value="UniProtKB-UniRule"/>
</dbReference>
<dbReference type="FunFam" id="3.30.1540.10:FF:000001">
    <property type="entry name" value="L-carnitine CoA-transferase"/>
    <property type="match status" value="1"/>
</dbReference>
<dbReference type="Gene3D" id="3.40.50.10540">
    <property type="entry name" value="Crotonobetainyl-coa:carnitine coa-transferase, domain 1"/>
    <property type="match status" value="1"/>
</dbReference>
<dbReference type="Gene3D" id="3.30.1540.10">
    <property type="entry name" value="formyl-coa transferase, domain 3"/>
    <property type="match status" value="1"/>
</dbReference>
<dbReference type="HAMAP" id="MF_01050">
    <property type="entry name" value="CaiB"/>
    <property type="match status" value="1"/>
</dbReference>
<dbReference type="InterPro" id="IPR050509">
    <property type="entry name" value="CoA-transferase_III"/>
</dbReference>
<dbReference type="InterPro" id="IPR023452">
    <property type="entry name" value="CoA-Trfase_CaiB"/>
</dbReference>
<dbReference type="InterPro" id="IPR003673">
    <property type="entry name" value="CoA-Trfase_fam_III"/>
</dbReference>
<dbReference type="InterPro" id="IPR044855">
    <property type="entry name" value="CoA-Trfase_III_dom3_sf"/>
</dbReference>
<dbReference type="InterPro" id="IPR023606">
    <property type="entry name" value="CoA-Trfase_III_dom_1_sf"/>
</dbReference>
<dbReference type="NCBIfam" id="NF002914">
    <property type="entry name" value="PRK03525.1"/>
    <property type="match status" value="1"/>
</dbReference>
<dbReference type="PANTHER" id="PTHR48228:SF6">
    <property type="entry name" value="L-CARNITINE COA-TRANSFERASE"/>
    <property type="match status" value="1"/>
</dbReference>
<dbReference type="PANTHER" id="PTHR48228">
    <property type="entry name" value="SUCCINYL-COA--D-CITRAMALATE COA-TRANSFERASE"/>
    <property type="match status" value="1"/>
</dbReference>
<dbReference type="Pfam" id="PF02515">
    <property type="entry name" value="CoA_transf_3"/>
    <property type="match status" value="1"/>
</dbReference>
<dbReference type="SUPFAM" id="SSF89796">
    <property type="entry name" value="CoA-transferase family III (CaiB/BaiF)"/>
    <property type="match status" value="1"/>
</dbReference>
<protein>
    <recommendedName>
        <fullName evidence="1">L-carnitine CoA-transferase</fullName>
        <ecNumber evidence="1">2.8.3.21</ecNumber>
    </recommendedName>
    <alternativeName>
        <fullName evidence="1">Crotonobetainyl-CoA:carnitine CoA-transferase</fullName>
    </alternativeName>
</protein>
<accession>Q1RGG0</accession>